<gene>
    <name type="ordered locus">NATL1_16191</name>
</gene>
<reference key="1">
    <citation type="journal article" date="2007" name="PLoS Genet.">
        <title>Patterns and implications of gene gain and loss in the evolution of Prochlorococcus.</title>
        <authorList>
            <person name="Kettler G.C."/>
            <person name="Martiny A.C."/>
            <person name="Huang K."/>
            <person name="Zucker J."/>
            <person name="Coleman M.L."/>
            <person name="Rodrigue S."/>
            <person name="Chen F."/>
            <person name="Lapidus A."/>
            <person name="Ferriera S."/>
            <person name="Johnson J."/>
            <person name="Steglich C."/>
            <person name="Church G.M."/>
            <person name="Richardson P."/>
            <person name="Chisholm S.W."/>
        </authorList>
    </citation>
    <scope>NUCLEOTIDE SEQUENCE [LARGE SCALE GENOMIC DNA]</scope>
    <source>
        <strain>NATL1A</strain>
    </source>
</reference>
<feature type="chain" id="PRO_0000346507" description="PKHD-type hydroxylase NATL1_16191">
    <location>
        <begin position="1"/>
        <end position="221"/>
    </location>
</feature>
<feature type="domain" description="Fe2OG dioxygenase" evidence="1">
    <location>
        <begin position="80"/>
        <end position="174"/>
    </location>
</feature>
<feature type="binding site" evidence="1">
    <location>
        <position position="98"/>
    </location>
    <ligand>
        <name>Fe cation</name>
        <dbReference type="ChEBI" id="CHEBI:24875"/>
    </ligand>
</feature>
<feature type="binding site" evidence="1">
    <location>
        <position position="100"/>
    </location>
    <ligand>
        <name>Fe cation</name>
        <dbReference type="ChEBI" id="CHEBI:24875"/>
    </ligand>
</feature>
<feature type="binding site" evidence="1">
    <location>
        <position position="155"/>
    </location>
    <ligand>
        <name>Fe cation</name>
        <dbReference type="ChEBI" id="CHEBI:24875"/>
    </ligand>
</feature>
<feature type="binding site" evidence="1">
    <location>
        <position position="165"/>
    </location>
    <ligand>
        <name>2-oxoglutarate</name>
        <dbReference type="ChEBI" id="CHEBI:16810"/>
    </ligand>
</feature>
<keyword id="KW-0223">Dioxygenase</keyword>
<keyword id="KW-0408">Iron</keyword>
<keyword id="KW-0479">Metal-binding</keyword>
<keyword id="KW-0560">Oxidoreductase</keyword>
<keyword id="KW-0847">Vitamin C</keyword>
<protein>
    <recommendedName>
        <fullName evidence="1">PKHD-type hydroxylase NATL1_16191</fullName>
        <ecNumber evidence="1">1.14.11.-</ecNumber>
    </recommendedName>
</protein>
<proteinExistence type="inferred from homology"/>
<evidence type="ECO:0000255" key="1">
    <source>
        <dbReference type="HAMAP-Rule" id="MF_00657"/>
    </source>
</evidence>
<sequence>MEYLTHSLIDETEALQIVNKLKAEKSSWQDGKKTAGSHAAEIKSNFQLDKNSKLSIELRDVIVNKIISNPLLKSFTLPSLIHGVMFTQSLVGHSYGSHIDNPYMPSGRSDLSFTLFLNAPEDYEGGELCIQTINKTEKIKLSAGEIIIYPSTQLHSVAEVKDGERHVCVGWIQSYVQNNEDRNFLFGLDAGAKGLLAKHGRSDELDLIFQAYSNILRRLGD</sequence>
<name>Y1619_PROM1</name>
<dbReference type="EC" id="1.14.11.-" evidence="1"/>
<dbReference type="EMBL" id="CP000553">
    <property type="protein sequence ID" value="ABM76176.1"/>
    <property type="molecule type" value="Genomic_DNA"/>
</dbReference>
<dbReference type="RefSeq" id="WP_011824185.1">
    <property type="nucleotide sequence ID" value="NC_008819.1"/>
</dbReference>
<dbReference type="SMR" id="A2C3W6"/>
<dbReference type="KEGG" id="pme:NATL1_16191"/>
<dbReference type="eggNOG" id="COG3128">
    <property type="taxonomic scope" value="Bacteria"/>
</dbReference>
<dbReference type="HOGENOM" id="CLU_106663_0_0_3"/>
<dbReference type="Proteomes" id="UP000002592">
    <property type="component" value="Chromosome"/>
</dbReference>
<dbReference type="GO" id="GO:0016706">
    <property type="term" value="F:2-oxoglutarate-dependent dioxygenase activity"/>
    <property type="evidence" value="ECO:0007669"/>
    <property type="project" value="UniProtKB-UniRule"/>
</dbReference>
<dbReference type="GO" id="GO:0005506">
    <property type="term" value="F:iron ion binding"/>
    <property type="evidence" value="ECO:0007669"/>
    <property type="project" value="UniProtKB-UniRule"/>
</dbReference>
<dbReference type="GO" id="GO:0031418">
    <property type="term" value="F:L-ascorbic acid binding"/>
    <property type="evidence" value="ECO:0007669"/>
    <property type="project" value="UniProtKB-KW"/>
</dbReference>
<dbReference type="GO" id="GO:0006974">
    <property type="term" value="P:DNA damage response"/>
    <property type="evidence" value="ECO:0007669"/>
    <property type="project" value="TreeGrafter"/>
</dbReference>
<dbReference type="GO" id="GO:0006879">
    <property type="term" value="P:intracellular iron ion homeostasis"/>
    <property type="evidence" value="ECO:0007669"/>
    <property type="project" value="TreeGrafter"/>
</dbReference>
<dbReference type="Gene3D" id="2.60.120.620">
    <property type="entry name" value="q2cbj1_9rhob like domain"/>
    <property type="match status" value="1"/>
</dbReference>
<dbReference type="Gene3D" id="4.10.860.20">
    <property type="entry name" value="Rabenosyn, Rab binding domain"/>
    <property type="match status" value="1"/>
</dbReference>
<dbReference type="HAMAP" id="MF_00657">
    <property type="entry name" value="Hydroxyl_YbiX"/>
    <property type="match status" value="1"/>
</dbReference>
<dbReference type="InterPro" id="IPR005123">
    <property type="entry name" value="Oxoglu/Fe-dep_dioxygenase_dom"/>
</dbReference>
<dbReference type="InterPro" id="IPR023550">
    <property type="entry name" value="PKHD_hydroxylase"/>
</dbReference>
<dbReference type="InterPro" id="IPR006620">
    <property type="entry name" value="Pro_4_hyd_alph"/>
</dbReference>
<dbReference type="InterPro" id="IPR044862">
    <property type="entry name" value="Pro_4_hyd_alph_FE2OG_OXY"/>
</dbReference>
<dbReference type="NCBIfam" id="NF003974">
    <property type="entry name" value="PRK05467.1-3"/>
    <property type="match status" value="1"/>
</dbReference>
<dbReference type="NCBIfam" id="NF003975">
    <property type="entry name" value="PRK05467.1-4"/>
    <property type="match status" value="1"/>
</dbReference>
<dbReference type="PANTHER" id="PTHR41536">
    <property type="entry name" value="PKHD-TYPE HYDROXYLASE YBIX"/>
    <property type="match status" value="1"/>
</dbReference>
<dbReference type="PANTHER" id="PTHR41536:SF1">
    <property type="entry name" value="PKHD-TYPE HYDROXYLASE YBIX"/>
    <property type="match status" value="1"/>
</dbReference>
<dbReference type="Pfam" id="PF13640">
    <property type="entry name" value="2OG-FeII_Oxy_3"/>
    <property type="match status" value="1"/>
</dbReference>
<dbReference type="SMART" id="SM00702">
    <property type="entry name" value="P4Hc"/>
    <property type="match status" value="1"/>
</dbReference>
<dbReference type="PROSITE" id="PS51471">
    <property type="entry name" value="FE2OG_OXY"/>
    <property type="match status" value="1"/>
</dbReference>
<organism>
    <name type="scientific">Prochlorococcus marinus (strain NATL1A)</name>
    <dbReference type="NCBI Taxonomy" id="167555"/>
    <lineage>
        <taxon>Bacteria</taxon>
        <taxon>Bacillati</taxon>
        <taxon>Cyanobacteriota</taxon>
        <taxon>Cyanophyceae</taxon>
        <taxon>Synechococcales</taxon>
        <taxon>Prochlorococcaceae</taxon>
        <taxon>Prochlorococcus</taxon>
    </lineage>
</organism>
<comment type="cofactor">
    <cofactor evidence="1">
        <name>Fe(2+)</name>
        <dbReference type="ChEBI" id="CHEBI:29033"/>
    </cofactor>
    <text evidence="1">Binds 1 Fe(2+) ion per subunit.</text>
</comment>
<comment type="cofactor">
    <cofactor evidence="1">
        <name>L-ascorbate</name>
        <dbReference type="ChEBI" id="CHEBI:38290"/>
    </cofactor>
</comment>
<accession>A2C3W6</accession>